<protein>
    <recommendedName>
        <fullName evidence="1">DNA-directed RNA polymerase subunit gamma</fullName>
        <shortName evidence="1">RNAP subunit gamma</shortName>
        <ecNumber evidence="1">2.7.7.6</ecNumber>
    </recommendedName>
    <alternativeName>
        <fullName evidence="1">RNA polymerase subunit gamma</fullName>
    </alternativeName>
    <alternativeName>
        <fullName evidence="1">Transcriptase subunit gamma</fullName>
    </alternativeName>
</protein>
<accession>A5GVF1</accession>
<reference key="1">
    <citation type="submission" date="2006-05" db="EMBL/GenBank/DDBJ databases">
        <authorList>
            <consortium name="Genoscope"/>
        </authorList>
    </citation>
    <scope>NUCLEOTIDE SEQUENCE [LARGE SCALE GENOMIC DNA]</scope>
    <source>
        <strain>RCC307</strain>
    </source>
</reference>
<gene>
    <name evidence="1" type="primary">rpoC1</name>
    <name type="ordered locus">SynRCC307_1957</name>
</gene>
<name>RPOC1_SYNR3</name>
<evidence type="ECO:0000255" key="1">
    <source>
        <dbReference type="HAMAP-Rule" id="MF_01323"/>
    </source>
</evidence>
<feature type="chain" id="PRO_1000051995" description="DNA-directed RNA polymerase subunit gamma">
    <location>
        <begin position="1"/>
        <end position="634"/>
    </location>
</feature>
<feature type="binding site" evidence="1">
    <location>
        <position position="74"/>
    </location>
    <ligand>
        <name>Zn(2+)</name>
        <dbReference type="ChEBI" id="CHEBI:29105"/>
    </ligand>
</feature>
<feature type="binding site" evidence="1">
    <location>
        <position position="76"/>
    </location>
    <ligand>
        <name>Zn(2+)</name>
        <dbReference type="ChEBI" id="CHEBI:29105"/>
    </ligand>
</feature>
<feature type="binding site" evidence="1">
    <location>
        <position position="89"/>
    </location>
    <ligand>
        <name>Zn(2+)</name>
        <dbReference type="ChEBI" id="CHEBI:29105"/>
    </ligand>
</feature>
<feature type="binding site" evidence="1">
    <location>
        <position position="92"/>
    </location>
    <ligand>
        <name>Zn(2+)</name>
        <dbReference type="ChEBI" id="CHEBI:29105"/>
    </ligand>
</feature>
<feature type="binding site" evidence="1">
    <location>
        <position position="471"/>
    </location>
    <ligand>
        <name>Mg(2+)</name>
        <dbReference type="ChEBI" id="CHEBI:18420"/>
    </ligand>
</feature>
<feature type="binding site" evidence="1">
    <location>
        <position position="473"/>
    </location>
    <ligand>
        <name>Mg(2+)</name>
        <dbReference type="ChEBI" id="CHEBI:18420"/>
    </ligand>
</feature>
<feature type="binding site" evidence="1">
    <location>
        <position position="475"/>
    </location>
    <ligand>
        <name>Mg(2+)</name>
        <dbReference type="ChEBI" id="CHEBI:18420"/>
    </ligand>
</feature>
<keyword id="KW-0240">DNA-directed RNA polymerase</keyword>
<keyword id="KW-0460">Magnesium</keyword>
<keyword id="KW-0479">Metal-binding</keyword>
<keyword id="KW-0548">Nucleotidyltransferase</keyword>
<keyword id="KW-1185">Reference proteome</keyword>
<keyword id="KW-0804">Transcription</keyword>
<keyword id="KW-0808">Transferase</keyword>
<keyword id="KW-0862">Zinc</keyword>
<sequence>MTNSNTRTESHFDYVKIKLASPERIREWGQRTLPNGQVVGEVTKPETINYRTLKPEMDGLFCEKIFGPSKDWECHCGKYKRVRHRGIVCERCGVEVTESRVRRHRMGFIKLAAPVSHVWYLKGIPSYVAILLDMPLRDVEQIVYFNCYVVLDPGDHKTLKYKQLLTEDEWLEIEDEIYAEDSEIETEPEVGIGAEALKALLEDLELTEIAEQLREDISGSKGQKRAKLIKRLRVIDNFIATDARPEWMVLDAIPVIPPDLRPMVQLDGGRFATSDLNDLYRRVINRNNRLARLQEILAPEIIVRNEKRMLQEAVDALIDNGRRGRTVVGANNRPLKSLSDIIEGKQGRFRQNLLGKRVDYSGRSVIVVGPKLKMHQCGLPKEMAIELFQPFVIHRLIRQNIVNNIKAAKKLIQRADDEVMQVLQEVIDGHPILLNRAPTLHRLGIQAFEPKLVDGRAIQLHPLVCPAFNADFDGDQMAVHVPLALEAQTEARMLMLASNNILSPATGQPIITPSQDMVLGAYYLTATRQERSKPEFGDRSRTYANLEDVCHAFEEKRITLHDWVWVRFNGAVDDDDEAKEPIKSETLSDGTRVEQWQYRRDRLDEDGALISRYVLTTTGRVVMNRTIIDAVVTR</sequence>
<organism>
    <name type="scientific">Synechococcus sp. (strain RCC307)</name>
    <dbReference type="NCBI Taxonomy" id="316278"/>
    <lineage>
        <taxon>Bacteria</taxon>
        <taxon>Bacillati</taxon>
        <taxon>Cyanobacteriota</taxon>
        <taxon>Cyanophyceae</taxon>
        <taxon>Synechococcales</taxon>
        <taxon>Synechococcaceae</taxon>
        <taxon>Synechococcus</taxon>
    </lineage>
</organism>
<proteinExistence type="inferred from homology"/>
<comment type="function">
    <text evidence="1">DNA-dependent RNA polymerase catalyzes the transcription of DNA into RNA using the four ribonucleoside triphosphates as substrates.</text>
</comment>
<comment type="catalytic activity">
    <reaction evidence="1">
        <text>RNA(n) + a ribonucleoside 5'-triphosphate = RNA(n+1) + diphosphate</text>
        <dbReference type="Rhea" id="RHEA:21248"/>
        <dbReference type="Rhea" id="RHEA-COMP:14527"/>
        <dbReference type="Rhea" id="RHEA-COMP:17342"/>
        <dbReference type="ChEBI" id="CHEBI:33019"/>
        <dbReference type="ChEBI" id="CHEBI:61557"/>
        <dbReference type="ChEBI" id="CHEBI:140395"/>
        <dbReference type="EC" id="2.7.7.6"/>
    </reaction>
</comment>
<comment type="cofactor">
    <cofactor evidence="1">
        <name>Mg(2+)</name>
        <dbReference type="ChEBI" id="CHEBI:18420"/>
    </cofactor>
    <text evidence="1">Binds 1 Mg(2+) ion per subunit.</text>
</comment>
<comment type="cofactor">
    <cofactor evidence="1">
        <name>Zn(2+)</name>
        <dbReference type="ChEBI" id="CHEBI:29105"/>
    </cofactor>
    <text evidence="1">Binds 1 Zn(2+) ion per subunit.</text>
</comment>
<comment type="subunit">
    <text evidence="1">In cyanobacteria the RNAP catalytic core is composed of 2 alpha, 1 beta, 1 beta', 1 gamma and 1 omega subunit. When a sigma factor is associated with the core the holoenzyme is formed, which can initiate transcription.</text>
</comment>
<comment type="similarity">
    <text evidence="1">Belongs to the RNA polymerase beta' chain family. RpoC1 subfamily.</text>
</comment>
<dbReference type="EC" id="2.7.7.6" evidence="1"/>
<dbReference type="EMBL" id="CT978603">
    <property type="protein sequence ID" value="CAK28860.1"/>
    <property type="molecule type" value="Genomic_DNA"/>
</dbReference>
<dbReference type="SMR" id="A5GVF1"/>
<dbReference type="STRING" id="316278.SynRCC307_1957"/>
<dbReference type="KEGG" id="syr:SynRCC307_1957"/>
<dbReference type="eggNOG" id="COG0086">
    <property type="taxonomic scope" value="Bacteria"/>
</dbReference>
<dbReference type="HOGENOM" id="CLU_030022_2_0_3"/>
<dbReference type="OrthoDB" id="9815296at2"/>
<dbReference type="Proteomes" id="UP000001115">
    <property type="component" value="Chromosome"/>
</dbReference>
<dbReference type="GO" id="GO:0000428">
    <property type="term" value="C:DNA-directed RNA polymerase complex"/>
    <property type="evidence" value="ECO:0007669"/>
    <property type="project" value="UniProtKB-KW"/>
</dbReference>
<dbReference type="GO" id="GO:0003677">
    <property type="term" value="F:DNA binding"/>
    <property type="evidence" value="ECO:0007669"/>
    <property type="project" value="UniProtKB-UniRule"/>
</dbReference>
<dbReference type="GO" id="GO:0003899">
    <property type="term" value="F:DNA-directed RNA polymerase activity"/>
    <property type="evidence" value="ECO:0007669"/>
    <property type="project" value="UniProtKB-UniRule"/>
</dbReference>
<dbReference type="GO" id="GO:0000287">
    <property type="term" value="F:magnesium ion binding"/>
    <property type="evidence" value="ECO:0007669"/>
    <property type="project" value="UniProtKB-UniRule"/>
</dbReference>
<dbReference type="GO" id="GO:0008270">
    <property type="term" value="F:zinc ion binding"/>
    <property type="evidence" value="ECO:0007669"/>
    <property type="project" value="UniProtKB-UniRule"/>
</dbReference>
<dbReference type="GO" id="GO:0006351">
    <property type="term" value="P:DNA-templated transcription"/>
    <property type="evidence" value="ECO:0007669"/>
    <property type="project" value="UniProtKB-UniRule"/>
</dbReference>
<dbReference type="Gene3D" id="1.10.40.90">
    <property type="match status" value="1"/>
</dbReference>
<dbReference type="Gene3D" id="2.40.40.20">
    <property type="match status" value="1"/>
</dbReference>
<dbReference type="Gene3D" id="4.10.860.120">
    <property type="entry name" value="RNA polymerase II, clamp domain"/>
    <property type="match status" value="1"/>
</dbReference>
<dbReference type="Gene3D" id="1.10.274.100">
    <property type="entry name" value="RNA polymerase Rpb1, domain 3"/>
    <property type="match status" value="1"/>
</dbReference>
<dbReference type="HAMAP" id="MF_01323">
    <property type="entry name" value="RNApol_bact_RpoC1"/>
    <property type="match status" value="1"/>
</dbReference>
<dbReference type="InterPro" id="IPR012755">
    <property type="entry name" value="DNA-dir_RpoC1_gamma"/>
</dbReference>
<dbReference type="InterPro" id="IPR045867">
    <property type="entry name" value="DNA-dir_RpoC_beta_prime"/>
</dbReference>
<dbReference type="InterPro" id="IPR000722">
    <property type="entry name" value="RNA_pol_asu"/>
</dbReference>
<dbReference type="InterPro" id="IPR006592">
    <property type="entry name" value="RNA_pol_N"/>
</dbReference>
<dbReference type="InterPro" id="IPR007080">
    <property type="entry name" value="RNA_pol_Rpb1_1"/>
</dbReference>
<dbReference type="InterPro" id="IPR007066">
    <property type="entry name" value="RNA_pol_Rpb1_3"/>
</dbReference>
<dbReference type="InterPro" id="IPR042102">
    <property type="entry name" value="RNA_pol_Rpb1_3_sf"/>
</dbReference>
<dbReference type="InterPro" id="IPR044893">
    <property type="entry name" value="RNA_pol_Rpb1_clamp_domain"/>
</dbReference>
<dbReference type="InterPro" id="IPR034678">
    <property type="entry name" value="RNApol_RpoC1"/>
</dbReference>
<dbReference type="NCBIfam" id="NF002729">
    <property type="entry name" value="PRK02625.1"/>
    <property type="match status" value="1"/>
</dbReference>
<dbReference type="NCBIfam" id="TIGR02387">
    <property type="entry name" value="rpoC1_cyan"/>
    <property type="match status" value="1"/>
</dbReference>
<dbReference type="PANTHER" id="PTHR19376">
    <property type="entry name" value="DNA-DIRECTED RNA POLYMERASE"/>
    <property type="match status" value="1"/>
</dbReference>
<dbReference type="PANTHER" id="PTHR19376:SF54">
    <property type="entry name" value="DNA-DIRECTED RNA POLYMERASE SUBUNIT BETA"/>
    <property type="match status" value="1"/>
</dbReference>
<dbReference type="Pfam" id="PF04997">
    <property type="entry name" value="RNA_pol_Rpb1_1"/>
    <property type="match status" value="1"/>
</dbReference>
<dbReference type="Pfam" id="PF00623">
    <property type="entry name" value="RNA_pol_Rpb1_2"/>
    <property type="match status" value="1"/>
</dbReference>
<dbReference type="Pfam" id="PF04983">
    <property type="entry name" value="RNA_pol_Rpb1_3"/>
    <property type="match status" value="1"/>
</dbReference>
<dbReference type="SMART" id="SM00663">
    <property type="entry name" value="RPOLA_N"/>
    <property type="match status" value="1"/>
</dbReference>
<dbReference type="SUPFAM" id="SSF64484">
    <property type="entry name" value="beta and beta-prime subunits of DNA dependent RNA-polymerase"/>
    <property type="match status" value="1"/>
</dbReference>